<comment type="function">
    <text evidence="4">Required as a cell surface receptor for peptidoglycan (PGN) elicitor signaling leading to innate immunity. Plays an essential role in detecting PGNs and restricting bacterial growth (of Pseudomonas syringae pv. tomato DC3000 for example).</text>
</comment>
<comment type="subunit">
    <text evidence="4">Interacts with peptidoglycans.</text>
</comment>
<comment type="subcellular location">
    <subcellularLocation>
        <location>Cell membrane</location>
        <topology>Lipid-anchor</topology>
        <topology>GPI-anchor</topology>
    </subcellularLocation>
</comment>
<comment type="disruption phenotype">
    <text evidence="4">Impaired sensitivity to peptidoglycans (PGNs) leading to higher susceptibility to infection with virulent Pseudomonas syringae pv. tomato DC3000.</text>
</comment>
<comment type="sequence caution" evidence="5">
    <conflict type="erroneous gene model prediction">
        <sequence resource="EMBL-CDS" id="AAG51658"/>
    </conflict>
</comment>
<reference key="1">
    <citation type="journal article" date="2000" name="Nature">
        <title>Sequence and analysis of chromosome 1 of the plant Arabidopsis thaliana.</title>
        <authorList>
            <person name="Theologis A."/>
            <person name="Ecker J.R."/>
            <person name="Palm C.J."/>
            <person name="Federspiel N.A."/>
            <person name="Kaul S."/>
            <person name="White O."/>
            <person name="Alonso J."/>
            <person name="Altafi H."/>
            <person name="Araujo R."/>
            <person name="Bowman C.L."/>
            <person name="Brooks S.Y."/>
            <person name="Buehler E."/>
            <person name="Chan A."/>
            <person name="Chao Q."/>
            <person name="Chen H."/>
            <person name="Cheuk R.F."/>
            <person name="Chin C.W."/>
            <person name="Chung M.K."/>
            <person name="Conn L."/>
            <person name="Conway A.B."/>
            <person name="Conway A.R."/>
            <person name="Creasy T.H."/>
            <person name="Dewar K."/>
            <person name="Dunn P."/>
            <person name="Etgu P."/>
            <person name="Feldblyum T.V."/>
            <person name="Feng J.-D."/>
            <person name="Fong B."/>
            <person name="Fujii C.Y."/>
            <person name="Gill J.E."/>
            <person name="Goldsmith A.D."/>
            <person name="Haas B."/>
            <person name="Hansen N.F."/>
            <person name="Hughes B."/>
            <person name="Huizar L."/>
            <person name="Hunter J.L."/>
            <person name="Jenkins J."/>
            <person name="Johnson-Hopson C."/>
            <person name="Khan S."/>
            <person name="Khaykin E."/>
            <person name="Kim C.J."/>
            <person name="Koo H.L."/>
            <person name="Kremenetskaia I."/>
            <person name="Kurtz D.B."/>
            <person name="Kwan A."/>
            <person name="Lam B."/>
            <person name="Langin-Hooper S."/>
            <person name="Lee A."/>
            <person name="Lee J.M."/>
            <person name="Lenz C.A."/>
            <person name="Li J.H."/>
            <person name="Li Y.-P."/>
            <person name="Lin X."/>
            <person name="Liu S.X."/>
            <person name="Liu Z.A."/>
            <person name="Luros J.S."/>
            <person name="Maiti R."/>
            <person name="Marziali A."/>
            <person name="Militscher J."/>
            <person name="Miranda M."/>
            <person name="Nguyen M."/>
            <person name="Nierman W.C."/>
            <person name="Osborne B.I."/>
            <person name="Pai G."/>
            <person name="Peterson J."/>
            <person name="Pham P.K."/>
            <person name="Rizzo M."/>
            <person name="Rooney T."/>
            <person name="Rowley D."/>
            <person name="Sakano H."/>
            <person name="Salzberg S.L."/>
            <person name="Schwartz J.R."/>
            <person name="Shinn P."/>
            <person name="Southwick A.M."/>
            <person name="Sun H."/>
            <person name="Tallon L.J."/>
            <person name="Tambunga G."/>
            <person name="Toriumi M.J."/>
            <person name="Town C.D."/>
            <person name="Utterback T."/>
            <person name="Van Aken S."/>
            <person name="Vaysberg M."/>
            <person name="Vysotskaia V.S."/>
            <person name="Walker M."/>
            <person name="Wu D."/>
            <person name="Yu G."/>
            <person name="Fraser C.M."/>
            <person name="Venter J.C."/>
            <person name="Davis R.W."/>
        </authorList>
    </citation>
    <scope>NUCLEOTIDE SEQUENCE [LARGE SCALE GENOMIC DNA]</scope>
    <source>
        <strain>cv. Columbia</strain>
    </source>
</reference>
<reference key="2">
    <citation type="journal article" date="2017" name="Plant J.">
        <title>Araport11: a complete reannotation of the Arabidopsis thaliana reference genome.</title>
        <authorList>
            <person name="Cheng C.Y."/>
            <person name="Krishnakumar V."/>
            <person name="Chan A.P."/>
            <person name="Thibaud-Nissen F."/>
            <person name="Schobel S."/>
            <person name="Town C.D."/>
        </authorList>
    </citation>
    <scope>GENOME REANNOTATION</scope>
    <source>
        <strain>cv. Columbia</strain>
    </source>
</reference>
<reference key="3">
    <citation type="submission" date="2003-12" db="EMBL/GenBank/DDBJ databases">
        <title>Arabidopsis ORF clones.</title>
        <authorList>
            <person name="Kim C.J."/>
            <person name="Chen H."/>
            <person name="Cheuk R.F."/>
            <person name="Shinn P."/>
            <person name="Carninci P."/>
            <person name="Hayashizaki Y."/>
            <person name="Ishida J."/>
            <person name="Kamiya A."/>
            <person name="Kawai J."/>
            <person name="Narusaka M."/>
            <person name="Sakurai T."/>
            <person name="Satou M."/>
            <person name="Seki M."/>
            <person name="Shinozaki K."/>
            <person name="Ecker J.R."/>
        </authorList>
    </citation>
    <scope>NUCLEOTIDE SEQUENCE [LARGE SCALE MRNA]</scope>
    <source>
        <strain>cv. Columbia</strain>
    </source>
</reference>
<reference key="4">
    <citation type="submission" date="2004-09" db="EMBL/GenBank/DDBJ databases">
        <title>Large-scale analysis of RIKEN Arabidopsis full-length (RAFL) cDNAs.</title>
        <authorList>
            <person name="Totoki Y."/>
            <person name="Seki M."/>
            <person name="Ishida J."/>
            <person name="Nakajima M."/>
            <person name="Enju A."/>
            <person name="Kamiya A."/>
            <person name="Narusaka M."/>
            <person name="Shin-i T."/>
            <person name="Nakagawa M."/>
            <person name="Sakamoto N."/>
            <person name="Oishi K."/>
            <person name="Kohara Y."/>
            <person name="Kobayashi M."/>
            <person name="Toyoda A."/>
            <person name="Sakaki Y."/>
            <person name="Sakurai T."/>
            <person name="Iida K."/>
            <person name="Akiyama K."/>
            <person name="Satou M."/>
            <person name="Toyoda T."/>
            <person name="Konagaya A."/>
            <person name="Carninci P."/>
            <person name="Kawai J."/>
            <person name="Hayashizaki Y."/>
            <person name="Shinozaki K."/>
        </authorList>
    </citation>
    <scope>NUCLEOTIDE SEQUENCE [LARGE SCALE MRNA]</scope>
    <source>
        <strain>cv. Columbia</strain>
    </source>
</reference>
<reference key="5">
    <citation type="journal article" date="2011" name="Proc. Natl. Acad. Sci. U.S.A.">
        <title>Arabidopsis lysin-motif proteins LYM1 LYM3 CERK1 mediate bacterial peptidoglycan sensing and immunity to bacterial infection.</title>
        <authorList>
            <person name="Willmann R."/>
            <person name="Lajunen H.M."/>
            <person name="Erbs G."/>
            <person name="Newman M.-A."/>
            <person name="Kolb D."/>
            <person name="Tsuda K."/>
            <person name="Katagiri F."/>
            <person name="Fliegmann J."/>
            <person name="Bono J.-J."/>
            <person name="Cullimore J.V."/>
            <person name="Jehle A.K."/>
            <person name="Goetz F."/>
            <person name="Kulik A."/>
            <person name="Molinaro A."/>
            <person name="Lipka V."/>
            <person name="Gust A.A."/>
            <person name="Nuernberger T."/>
        </authorList>
    </citation>
    <scope>FUNCTION</scope>
    <scope>DISRUPTION PHENOTYPE</scope>
    <scope>INTERACTION WITH PEPTIDOGLYCAN</scope>
    <source>
        <strain>cv. Columbia</strain>
    </source>
</reference>
<name>LYM3_ARATH</name>
<sequence length="423" mass="44152">MKNPEKPLLLFLILASSLASMATAKSTIEPCSSKDTCNSLLGYTLYTDLKVTEVASLFQVDPVSMLLSNSIDISYPDVENHVLPAKLFLKIPITCSCVDGIRKSLSTHYKTRTSDTLGSIADSVYGGLVSPEQIQVANSETDLSVLDVGTKLVIPLPCACFNGTDESLPALYLSYVVRGIDTMAGIAKRFSTSVTDLTNVNAMGAPDINPGDILAVPLLACSSNFPKYATDYGLIIPNGSYALTAGHCVQCSCVLGSRSMYCEPASISVSCSSMRCRNSNFMLGNITSQQSSSGCKLTTCSYNGFASGTILTTLSMSLQPRCPGPQQLAPLIAPPDNVPKELMYLPSPSPSPSPEFDDIAGGGSSIAAVPAASPGGATVSSSNSIPGNPANGPGGSISIASCPLSYYSFIALLIPIGSCFFVF</sequence>
<accession>Q6NPN4</accession>
<accession>Q9CAP5</accession>
<dbReference type="EMBL" id="AC010704">
    <property type="protein sequence ID" value="AAG51658.1"/>
    <property type="status" value="ALT_SEQ"/>
    <property type="molecule type" value="Genomic_DNA"/>
</dbReference>
<dbReference type="EMBL" id="CP002684">
    <property type="protein sequence ID" value="AEE36002.1"/>
    <property type="molecule type" value="Genomic_DNA"/>
</dbReference>
<dbReference type="EMBL" id="BT010885">
    <property type="protein sequence ID" value="AAR24663.1"/>
    <property type="molecule type" value="mRNA"/>
</dbReference>
<dbReference type="EMBL" id="AK176769">
    <property type="protein sequence ID" value="BAD44532.1"/>
    <property type="molecule type" value="mRNA"/>
</dbReference>
<dbReference type="PIR" id="H96805">
    <property type="entry name" value="H96805"/>
</dbReference>
<dbReference type="RefSeq" id="NP_177886.2">
    <property type="nucleotide sequence ID" value="NM_106411.4"/>
</dbReference>
<dbReference type="SMR" id="Q6NPN4"/>
<dbReference type="FunCoup" id="Q6NPN4">
    <property type="interactions" value="652"/>
</dbReference>
<dbReference type="STRING" id="3702.Q6NPN4"/>
<dbReference type="GlyCosmos" id="Q6NPN4">
    <property type="glycosylation" value="3 sites, No reported glycans"/>
</dbReference>
<dbReference type="GlyGen" id="Q6NPN4">
    <property type="glycosylation" value="3 sites"/>
</dbReference>
<dbReference type="PaxDb" id="3702-AT1G77630.1"/>
<dbReference type="ProteomicsDB" id="238684"/>
<dbReference type="EnsemblPlants" id="AT1G77630.1">
    <property type="protein sequence ID" value="AT1G77630.1"/>
    <property type="gene ID" value="AT1G77630"/>
</dbReference>
<dbReference type="GeneID" id="844098"/>
<dbReference type="Gramene" id="AT1G77630.1">
    <property type="protein sequence ID" value="AT1G77630.1"/>
    <property type="gene ID" value="AT1G77630"/>
</dbReference>
<dbReference type="KEGG" id="ath:AT1G77630"/>
<dbReference type="Araport" id="AT1G77630"/>
<dbReference type="TAIR" id="AT1G77630">
    <property type="gene designation" value="LYM3"/>
</dbReference>
<dbReference type="eggNOG" id="ENOG502QWAT">
    <property type="taxonomic scope" value="Eukaryota"/>
</dbReference>
<dbReference type="HOGENOM" id="CLU_047073_3_0_1"/>
<dbReference type="InParanoid" id="Q6NPN4"/>
<dbReference type="OMA" id="VPKELMY"/>
<dbReference type="PhylomeDB" id="Q6NPN4"/>
<dbReference type="PRO" id="PR:Q6NPN4"/>
<dbReference type="Proteomes" id="UP000006548">
    <property type="component" value="Chromosome 1"/>
</dbReference>
<dbReference type="ExpressionAtlas" id="Q6NPN4">
    <property type="expression patterns" value="baseline and differential"/>
</dbReference>
<dbReference type="GO" id="GO:0005886">
    <property type="term" value="C:plasma membrane"/>
    <property type="evidence" value="ECO:0000314"/>
    <property type="project" value="TAIR"/>
</dbReference>
<dbReference type="GO" id="GO:0098552">
    <property type="term" value="C:side of membrane"/>
    <property type="evidence" value="ECO:0007669"/>
    <property type="project" value="UniProtKB-KW"/>
</dbReference>
<dbReference type="GO" id="GO:0042834">
    <property type="term" value="F:peptidoglycan binding"/>
    <property type="evidence" value="ECO:0000314"/>
    <property type="project" value="TAIR"/>
</dbReference>
<dbReference type="GO" id="GO:0006952">
    <property type="term" value="P:defense response"/>
    <property type="evidence" value="ECO:0007669"/>
    <property type="project" value="UniProtKB-KW"/>
</dbReference>
<dbReference type="GO" id="GO:0006955">
    <property type="term" value="P:immune response"/>
    <property type="evidence" value="ECO:0000315"/>
    <property type="project" value="TAIR"/>
</dbReference>
<dbReference type="CDD" id="cd00118">
    <property type="entry name" value="LysM"/>
    <property type="match status" value="2"/>
</dbReference>
<dbReference type="Gene3D" id="3.10.350.10">
    <property type="entry name" value="LysM domain"/>
    <property type="match status" value="2"/>
</dbReference>
<dbReference type="InterPro" id="IPR018392">
    <property type="entry name" value="LysM_dom"/>
</dbReference>
<dbReference type="InterPro" id="IPR036779">
    <property type="entry name" value="LysM_dom_sf"/>
</dbReference>
<dbReference type="PANTHER" id="PTHR33734">
    <property type="entry name" value="LYSM DOMAIN-CONTAINING GPI-ANCHORED PROTEIN 2"/>
    <property type="match status" value="1"/>
</dbReference>
<dbReference type="PANTHER" id="PTHR33734:SF16">
    <property type="entry name" value="LYSM DOMAIN-CONTAINING GPI-ANCHORED PROTEIN 3"/>
    <property type="match status" value="1"/>
</dbReference>
<dbReference type="Pfam" id="PF01476">
    <property type="entry name" value="LysM"/>
    <property type="match status" value="2"/>
</dbReference>
<dbReference type="SMART" id="SM00257">
    <property type="entry name" value="LysM"/>
    <property type="match status" value="2"/>
</dbReference>
<dbReference type="SUPFAM" id="SSF54106">
    <property type="entry name" value="LysM domain"/>
    <property type="match status" value="1"/>
</dbReference>
<dbReference type="PROSITE" id="PS51782">
    <property type="entry name" value="LYSM"/>
    <property type="match status" value="2"/>
</dbReference>
<gene>
    <name type="primary">LYM3</name>
    <name type="ordered locus">At1g77630</name>
    <name type="ORF">T5M16.22</name>
</gene>
<feature type="signal peptide" evidence="2">
    <location>
        <begin position="1"/>
        <end position="24"/>
    </location>
</feature>
<feature type="chain" id="PRO_0000252123" description="LysM domain-containing GPI-anchored protein 3">
    <location>
        <begin position="25"/>
        <end position="394"/>
    </location>
</feature>
<feature type="propeptide" id="PRO_0000252124" description="Removed in mature form" evidence="2">
    <location>
        <begin position="395"/>
        <end position="423"/>
    </location>
</feature>
<feature type="domain" description="LysM 1" evidence="3">
    <location>
        <begin position="107"/>
        <end position="154"/>
    </location>
</feature>
<feature type="domain" description="LysM 2" evidence="3">
    <location>
        <begin position="173"/>
        <end position="216"/>
    </location>
</feature>
<feature type="lipid moiety-binding region" description="GPI-anchor amidated glycine" evidence="2">
    <location>
        <position position="394"/>
    </location>
</feature>
<feature type="glycosylation site" description="N-linked (GlcNAc...) asparagine" evidence="2">
    <location>
        <position position="162"/>
    </location>
</feature>
<feature type="glycosylation site" description="N-linked (GlcNAc...) asparagine" evidence="2">
    <location>
        <position position="238"/>
    </location>
</feature>
<feature type="glycosylation site" description="N-linked (GlcNAc...) asparagine" evidence="2">
    <location>
        <position position="285"/>
    </location>
</feature>
<feature type="disulfide bond" evidence="1">
    <location>
        <begin position="31"/>
        <end position="97"/>
    </location>
</feature>
<feature type="disulfide bond" evidence="1">
    <location>
        <begin position="37"/>
        <end position="160"/>
    </location>
</feature>
<feature type="disulfide bond" evidence="1">
    <location>
        <begin position="95"/>
        <end position="158"/>
    </location>
</feature>
<feature type="disulfide bond" evidence="1">
    <location>
        <begin position="97"/>
        <end position="160"/>
    </location>
</feature>
<feature type="disulfide bond" evidence="1">
    <location>
        <begin position="221"/>
        <end position="253"/>
    </location>
</feature>
<feature type="disulfide bond" evidence="1">
    <location>
        <begin position="248"/>
        <end position="276"/>
    </location>
</feature>
<organism>
    <name type="scientific">Arabidopsis thaliana</name>
    <name type="common">Mouse-ear cress</name>
    <dbReference type="NCBI Taxonomy" id="3702"/>
    <lineage>
        <taxon>Eukaryota</taxon>
        <taxon>Viridiplantae</taxon>
        <taxon>Streptophyta</taxon>
        <taxon>Embryophyta</taxon>
        <taxon>Tracheophyta</taxon>
        <taxon>Spermatophyta</taxon>
        <taxon>Magnoliopsida</taxon>
        <taxon>eudicotyledons</taxon>
        <taxon>Gunneridae</taxon>
        <taxon>Pentapetalae</taxon>
        <taxon>rosids</taxon>
        <taxon>malvids</taxon>
        <taxon>Brassicales</taxon>
        <taxon>Brassicaceae</taxon>
        <taxon>Camelineae</taxon>
        <taxon>Arabidopsis</taxon>
    </lineage>
</organism>
<keyword id="KW-1003">Cell membrane</keyword>
<keyword id="KW-1015">Disulfide bond</keyword>
<keyword id="KW-0325">Glycoprotein</keyword>
<keyword id="KW-0336">GPI-anchor</keyword>
<keyword id="KW-0449">Lipoprotein</keyword>
<keyword id="KW-0472">Membrane</keyword>
<keyword id="KW-0611">Plant defense</keyword>
<keyword id="KW-1185">Reference proteome</keyword>
<keyword id="KW-0677">Repeat</keyword>
<keyword id="KW-0732">Signal</keyword>
<proteinExistence type="evidence at protein level"/>
<protein>
    <recommendedName>
        <fullName>LysM domain-containing GPI-anchored protein 3</fullName>
    </recommendedName>
</protein>
<evidence type="ECO:0000250" key="1">
    <source>
        <dbReference type="UniProtKB" id="Q8H8C7"/>
    </source>
</evidence>
<evidence type="ECO:0000255" key="2"/>
<evidence type="ECO:0000255" key="3">
    <source>
        <dbReference type="PROSITE-ProRule" id="PRU01118"/>
    </source>
</evidence>
<evidence type="ECO:0000269" key="4">
    <source>
    </source>
</evidence>
<evidence type="ECO:0000305" key="5"/>